<feature type="signal peptide" description="Tat-type signal" evidence="1">
    <location>
        <begin position="1"/>
        <end position="32"/>
    </location>
</feature>
<feature type="chain" id="PRO_5000237918" description="Glucans biosynthesis protein D">
    <location>
        <begin position="33"/>
        <end position="551"/>
    </location>
</feature>
<comment type="function">
    <text evidence="1">Probably involved in the control of the structural glucose backbone of osmoregulated periplasmic glucans (OPGs).</text>
</comment>
<comment type="pathway">
    <text evidence="1">Glycan metabolism; osmoregulated periplasmic glucan (OPG) biosynthesis.</text>
</comment>
<comment type="subcellular location">
    <subcellularLocation>
        <location evidence="1">Periplasm</location>
    </subcellularLocation>
</comment>
<comment type="PTM">
    <text>Predicted to be exported by the Tat system. The position of the signal peptide cleavage has not been experimentally proven.</text>
</comment>
<comment type="similarity">
    <text evidence="1">Belongs to the OpgD/OpgG family.</text>
</comment>
<reference key="1">
    <citation type="journal article" date="2010" name="PLoS Genet.">
        <title>Genome sequence of the plant growth promoting endophytic bacterium Enterobacter sp. 638.</title>
        <authorList>
            <person name="Taghavi S."/>
            <person name="van der Lelie D."/>
            <person name="Hoffman A."/>
            <person name="Zhang Y.B."/>
            <person name="Walla M.D."/>
            <person name="Vangronsveld J."/>
            <person name="Newman L."/>
            <person name="Monchy S."/>
        </authorList>
    </citation>
    <scope>NUCLEOTIDE SEQUENCE [LARGE SCALE GENOMIC DNA]</scope>
    <source>
        <strain>638</strain>
    </source>
</reference>
<accession>A4WAB7</accession>
<sequence length="551" mass="62869">MNRRRFLQGSLAMAALSGTTGLSTLFSRAAFAADSDIADGQSRRFDFSVLQSMAHDLAQTPWGGAPRPLPNTLATMTPQAYNAIQYDAKQSLWNNIEDRQLDVQFFHMGMGFRRRVRMFSLDSASSQAREIHFRPELFNYNDAGVDTKQLEGQSDLGFAGFRAFKAPELARRDIVSFLGASYFRAVDDTYQYGLSARGLAIDTFTDTPEEFPDFTSFWFETVKPGDTTFTVYTLLDSPSITGAYKFVIHCEKSQVIMEVDNHLYARKDIKQLGISPMTSMFACGNNERRMCDTIHPQIHDSDRLAMWRGNGEWICRPLNNPQKLQFNAYQDKNPKGFGLLQLDRDFSHYQDIMGWYNKRPSLWVEPRNQWGKGSVGLMEIPTTGETLDNVVCFWQPEKPVKAGDELDFKYRLYWSAQPPVRSPLANVYATRTGMGGFPEGWAPGENYPKTWARRFAIDFVGGDLKAAAPKGIEPVITLSNGEARQVEILYVEPFDGYRILFDWYPTNDSTDPIDMRMFLRCQGDAISETWLYQYFPPAPDKRVYVDDRVMR</sequence>
<dbReference type="EMBL" id="CP000653">
    <property type="protein sequence ID" value="ABP60647.1"/>
    <property type="molecule type" value="Genomic_DNA"/>
</dbReference>
<dbReference type="RefSeq" id="WP_012017362.1">
    <property type="nucleotide sequence ID" value="NC_009436.1"/>
</dbReference>
<dbReference type="SMR" id="A4WAB7"/>
<dbReference type="STRING" id="399742.Ent638_1971"/>
<dbReference type="KEGG" id="ent:Ent638_1971"/>
<dbReference type="eggNOG" id="COG3131">
    <property type="taxonomic scope" value="Bacteria"/>
</dbReference>
<dbReference type="HOGENOM" id="CLU_023403_2_0_6"/>
<dbReference type="OrthoDB" id="335750at2"/>
<dbReference type="UniPathway" id="UPA00637"/>
<dbReference type="Proteomes" id="UP000000230">
    <property type="component" value="Chromosome"/>
</dbReference>
<dbReference type="GO" id="GO:0030288">
    <property type="term" value="C:outer membrane-bounded periplasmic space"/>
    <property type="evidence" value="ECO:0007669"/>
    <property type="project" value="TreeGrafter"/>
</dbReference>
<dbReference type="GO" id="GO:0030246">
    <property type="term" value="F:carbohydrate binding"/>
    <property type="evidence" value="ECO:0007669"/>
    <property type="project" value="InterPro"/>
</dbReference>
<dbReference type="GO" id="GO:0003824">
    <property type="term" value="F:catalytic activity"/>
    <property type="evidence" value="ECO:0007669"/>
    <property type="project" value="InterPro"/>
</dbReference>
<dbReference type="GO" id="GO:0051274">
    <property type="term" value="P:beta-glucan biosynthetic process"/>
    <property type="evidence" value="ECO:0007669"/>
    <property type="project" value="TreeGrafter"/>
</dbReference>
<dbReference type="Gene3D" id="2.70.98.10">
    <property type="match status" value="1"/>
</dbReference>
<dbReference type="Gene3D" id="2.60.40.10">
    <property type="entry name" value="Immunoglobulins"/>
    <property type="match status" value="1"/>
</dbReference>
<dbReference type="HAMAP" id="MF_01068">
    <property type="entry name" value="MdoD_OpgD"/>
    <property type="match status" value="1"/>
</dbReference>
<dbReference type="InterPro" id="IPR011013">
    <property type="entry name" value="Gal_mutarotase_sf_dom"/>
</dbReference>
<dbReference type="InterPro" id="IPR014718">
    <property type="entry name" value="GH-type_carb-bd"/>
</dbReference>
<dbReference type="InterPro" id="IPR023724">
    <property type="entry name" value="Glucan_biosyn_MdoD"/>
</dbReference>
<dbReference type="InterPro" id="IPR014438">
    <property type="entry name" value="Glucan_biosyn_MdoG/MdoD"/>
</dbReference>
<dbReference type="InterPro" id="IPR007444">
    <property type="entry name" value="Glucan_biosyn_MdoG_C"/>
</dbReference>
<dbReference type="InterPro" id="IPR013783">
    <property type="entry name" value="Ig-like_fold"/>
</dbReference>
<dbReference type="InterPro" id="IPR014756">
    <property type="entry name" value="Ig_E-set"/>
</dbReference>
<dbReference type="InterPro" id="IPR006311">
    <property type="entry name" value="TAT_signal"/>
</dbReference>
<dbReference type="PANTHER" id="PTHR30504">
    <property type="entry name" value="GLUCANS BIOSYNTHESIS PROTEIN"/>
    <property type="match status" value="1"/>
</dbReference>
<dbReference type="PANTHER" id="PTHR30504:SF3">
    <property type="entry name" value="GLUCANS BIOSYNTHESIS PROTEIN D"/>
    <property type="match status" value="1"/>
</dbReference>
<dbReference type="Pfam" id="PF04349">
    <property type="entry name" value="MdoG"/>
    <property type="match status" value="1"/>
</dbReference>
<dbReference type="PIRSF" id="PIRSF006281">
    <property type="entry name" value="MdoG"/>
    <property type="match status" value="1"/>
</dbReference>
<dbReference type="SUPFAM" id="SSF81296">
    <property type="entry name" value="E set domains"/>
    <property type="match status" value="1"/>
</dbReference>
<dbReference type="SUPFAM" id="SSF74650">
    <property type="entry name" value="Galactose mutarotase-like"/>
    <property type="match status" value="1"/>
</dbReference>
<dbReference type="PROSITE" id="PS51318">
    <property type="entry name" value="TAT"/>
    <property type="match status" value="1"/>
</dbReference>
<evidence type="ECO:0000255" key="1">
    <source>
        <dbReference type="HAMAP-Rule" id="MF_01068"/>
    </source>
</evidence>
<organism>
    <name type="scientific">Enterobacter sp. (strain 638)</name>
    <dbReference type="NCBI Taxonomy" id="399742"/>
    <lineage>
        <taxon>Bacteria</taxon>
        <taxon>Pseudomonadati</taxon>
        <taxon>Pseudomonadota</taxon>
        <taxon>Gammaproteobacteria</taxon>
        <taxon>Enterobacterales</taxon>
        <taxon>Enterobacteriaceae</taxon>
        <taxon>Enterobacter</taxon>
    </lineage>
</organism>
<keyword id="KW-0574">Periplasm</keyword>
<keyword id="KW-0732">Signal</keyword>
<protein>
    <recommendedName>
        <fullName evidence="1">Glucans biosynthesis protein D</fullName>
    </recommendedName>
</protein>
<proteinExistence type="inferred from homology"/>
<name>OPGD_ENT38</name>
<gene>
    <name evidence="1" type="primary">mdoD</name>
    <name evidence="1" type="synonym">opgD</name>
    <name type="ordered locus">Ent638_1971</name>
</gene>